<dbReference type="EC" id="3.1.4.17" evidence="7"/>
<dbReference type="EMBL" id="M94867">
    <property type="protein sequence ID" value="AAA74558.1"/>
    <property type="molecule type" value="mRNA"/>
</dbReference>
<dbReference type="PIR" id="A44162">
    <property type="entry name" value="A44162"/>
</dbReference>
<dbReference type="RefSeq" id="NP_776840.1">
    <property type="nucleotide sequence ID" value="NM_174415.2"/>
</dbReference>
<dbReference type="SMR" id="Q01061"/>
<dbReference type="BioGRID" id="159261">
    <property type="interactions" value="2"/>
</dbReference>
<dbReference type="FunCoup" id="Q01061">
    <property type="interactions" value="948"/>
</dbReference>
<dbReference type="STRING" id="9913.ENSBTAP00000005680"/>
<dbReference type="BindingDB" id="Q01061"/>
<dbReference type="ChEMBL" id="CHEMBL2650"/>
<dbReference type="DrugCentral" id="Q01061"/>
<dbReference type="PaxDb" id="9913-ENSBTAP00000005680"/>
<dbReference type="GeneID" id="281970"/>
<dbReference type="KEGG" id="bta:281970"/>
<dbReference type="CTD" id="5153"/>
<dbReference type="eggNOG" id="KOG3688">
    <property type="taxonomic scope" value="Eukaryota"/>
</dbReference>
<dbReference type="HOGENOM" id="CLU_005940_1_3_1"/>
<dbReference type="InParanoid" id="Q01061"/>
<dbReference type="OrthoDB" id="189220at2759"/>
<dbReference type="SABIO-RK" id="Q01061"/>
<dbReference type="PRO" id="PR:Q01061"/>
<dbReference type="Proteomes" id="UP000009136">
    <property type="component" value="Unplaced"/>
</dbReference>
<dbReference type="GO" id="GO:0005829">
    <property type="term" value="C:cytosol"/>
    <property type="evidence" value="ECO:0000250"/>
    <property type="project" value="UniProtKB"/>
</dbReference>
<dbReference type="GO" id="GO:0043025">
    <property type="term" value="C:neuronal cell body"/>
    <property type="evidence" value="ECO:0000318"/>
    <property type="project" value="GO_Central"/>
</dbReference>
<dbReference type="GO" id="GO:0004115">
    <property type="term" value="F:3',5'-cyclic-AMP phosphodiesterase activity"/>
    <property type="evidence" value="ECO:0000314"/>
    <property type="project" value="UniProtKB"/>
</dbReference>
<dbReference type="GO" id="GO:0047555">
    <property type="term" value="F:3',5'-cyclic-GMP phosphodiesterase activity"/>
    <property type="evidence" value="ECO:0000314"/>
    <property type="project" value="UniProtKB"/>
</dbReference>
<dbReference type="GO" id="GO:0005516">
    <property type="term" value="F:calmodulin binding"/>
    <property type="evidence" value="ECO:0007669"/>
    <property type="project" value="UniProtKB-KW"/>
</dbReference>
<dbReference type="GO" id="GO:0048101">
    <property type="term" value="F:calmodulin-activated 3',5'-cyclic-GMP phosphodiesterase activity"/>
    <property type="evidence" value="ECO:0000314"/>
    <property type="project" value="MGI"/>
</dbReference>
<dbReference type="GO" id="GO:0004117">
    <property type="term" value="F:calmodulin-activated dual specificity 3',5'-cyclic-GMP, 3',5'-cyclic-AMP phosphodiesterase activity"/>
    <property type="evidence" value="ECO:0000314"/>
    <property type="project" value="MGI"/>
</dbReference>
<dbReference type="GO" id="GO:0046872">
    <property type="term" value="F:metal ion binding"/>
    <property type="evidence" value="ECO:0007669"/>
    <property type="project" value="UniProtKB-KW"/>
</dbReference>
<dbReference type="GO" id="GO:0019933">
    <property type="term" value="P:cAMP-mediated signaling"/>
    <property type="evidence" value="ECO:0000318"/>
    <property type="project" value="GO_Central"/>
</dbReference>
<dbReference type="CDD" id="cd00077">
    <property type="entry name" value="HDc"/>
    <property type="match status" value="1"/>
</dbReference>
<dbReference type="FunFam" id="1.10.1300.10:FF:000012">
    <property type="entry name" value="Phosphodiesterase"/>
    <property type="match status" value="1"/>
</dbReference>
<dbReference type="Gene3D" id="1.10.1300.10">
    <property type="entry name" value="3'5'-cyclic nucleotide phosphodiesterase, catalytic domain"/>
    <property type="match status" value="1"/>
</dbReference>
<dbReference type="InterPro" id="IPR003607">
    <property type="entry name" value="HD/PDEase_dom"/>
</dbReference>
<dbReference type="InterPro" id="IPR023088">
    <property type="entry name" value="PDEase"/>
</dbReference>
<dbReference type="InterPro" id="IPR002073">
    <property type="entry name" value="PDEase_catalytic_dom"/>
</dbReference>
<dbReference type="InterPro" id="IPR036971">
    <property type="entry name" value="PDEase_catalytic_dom_sf"/>
</dbReference>
<dbReference type="InterPro" id="IPR023174">
    <property type="entry name" value="PDEase_CS"/>
</dbReference>
<dbReference type="InterPro" id="IPR013706">
    <property type="entry name" value="PDEase_N"/>
</dbReference>
<dbReference type="PANTHER" id="PTHR11347">
    <property type="entry name" value="CYCLIC NUCLEOTIDE PHOSPHODIESTERASE"/>
    <property type="match status" value="1"/>
</dbReference>
<dbReference type="Pfam" id="PF00233">
    <property type="entry name" value="PDEase_I"/>
    <property type="match status" value="1"/>
</dbReference>
<dbReference type="Pfam" id="PF08499">
    <property type="entry name" value="PDEase_I_N"/>
    <property type="match status" value="1"/>
</dbReference>
<dbReference type="PRINTS" id="PR00387">
    <property type="entry name" value="PDIESTERASE1"/>
</dbReference>
<dbReference type="SMART" id="SM00471">
    <property type="entry name" value="HDc"/>
    <property type="match status" value="1"/>
</dbReference>
<dbReference type="SUPFAM" id="SSF109604">
    <property type="entry name" value="HD-domain/PDEase-like"/>
    <property type="match status" value="1"/>
</dbReference>
<dbReference type="PROSITE" id="PS00126">
    <property type="entry name" value="PDEASE_I_1"/>
    <property type="match status" value="1"/>
</dbReference>
<dbReference type="PROSITE" id="PS51845">
    <property type="entry name" value="PDEASE_I_2"/>
    <property type="match status" value="1"/>
</dbReference>
<keyword id="KW-0112">Calmodulin-binding</keyword>
<keyword id="KW-0114">cAMP</keyword>
<keyword id="KW-0140">cGMP</keyword>
<keyword id="KW-0963">Cytoplasm</keyword>
<keyword id="KW-0903">Direct protein sequencing</keyword>
<keyword id="KW-0378">Hydrolase</keyword>
<keyword id="KW-0460">Magnesium</keyword>
<keyword id="KW-0479">Metal-binding</keyword>
<keyword id="KW-0597">Phosphoprotein</keyword>
<keyword id="KW-1185">Reference proteome</keyword>
<keyword id="KW-0862">Zinc</keyword>
<evidence type="ECO:0000250" key="1">
    <source>
        <dbReference type="UniProtKB" id="O76083"/>
    </source>
</evidence>
<evidence type="ECO:0000250" key="2">
    <source>
        <dbReference type="UniProtKB" id="P14100"/>
    </source>
</evidence>
<evidence type="ECO:0000250" key="3">
    <source>
        <dbReference type="UniProtKB" id="Q01064"/>
    </source>
</evidence>
<evidence type="ECO:0000250" key="4">
    <source>
        <dbReference type="UniProtKB" id="Q01065"/>
    </source>
</evidence>
<evidence type="ECO:0000255" key="5">
    <source>
        <dbReference type="PROSITE-ProRule" id="PRU01192"/>
    </source>
</evidence>
<evidence type="ECO:0000256" key="6">
    <source>
        <dbReference type="SAM" id="MobiDB-lite"/>
    </source>
</evidence>
<evidence type="ECO:0000269" key="7">
    <source>
    </source>
</evidence>
<evidence type="ECO:0000303" key="8">
    <source>
    </source>
</evidence>
<evidence type="ECO:0000305" key="9"/>
<evidence type="ECO:0000305" key="10">
    <source>
    </source>
</evidence>
<sequence>MELSPRSPPEMLESDCPSPLELKSAPSKKMWIKLRSLLRYMVKQLENGEVNIEELKKNLEYTASLLEAVYIDETRQILDTEDELQELRSDAVPSEVRDWLASTFTQQTRAKGPSEEKPKFRSIVHAVQAGIFVERMFRRTYTSVGPTYSTAVLNCLKNVDLWCFDVFSLNRAADDHALRTIVFELLTRHNLISRFKIPTVFLMTFLDALETGYGKYKNPYHNQIHAADVTQTVHCFLLRTGMVHCLSEIEVLAIIFAAAIHDYEHTGTTNSFHIQTKSECAILYNDRSVLENHHISSVFRMMQDDEMNIFINLTKDEFVELRALVIEMVLATDMSCHFQQVKSMKTALQQLERIDKSKALSLLLHAADISHPTKQWSVHSRWTKALMEEFFRQGDKEAELGLPFSPLCDRTSTLVAQSQIGFIDFIVEPTFSVLTDVAEKSVQPTGDDDSKSKNQPSFQWRQPSLDVEVGDPNPDVVSFRSTWTKYIQENKQKWKERAASGITNQMSIDELSPCEEEAPASPAEDEHNQNGNLD</sequence>
<organism>
    <name type="scientific">Bos taurus</name>
    <name type="common">Bovine</name>
    <dbReference type="NCBI Taxonomy" id="9913"/>
    <lineage>
        <taxon>Eukaryota</taxon>
        <taxon>Metazoa</taxon>
        <taxon>Chordata</taxon>
        <taxon>Craniata</taxon>
        <taxon>Vertebrata</taxon>
        <taxon>Euteleostomi</taxon>
        <taxon>Mammalia</taxon>
        <taxon>Eutheria</taxon>
        <taxon>Laurasiatheria</taxon>
        <taxon>Artiodactyla</taxon>
        <taxon>Ruminantia</taxon>
        <taxon>Pecora</taxon>
        <taxon>Bovidae</taxon>
        <taxon>Bovinae</taxon>
        <taxon>Bos</taxon>
    </lineage>
</organism>
<protein>
    <recommendedName>
        <fullName evidence="10">Dual specificity calcium/calmodulin-dependent 3',5'-cyclic nucleotide phosphodiesterase 1B</fullName>
        <shortName evidence="8">Cam-PDE 1B</shortName>
        <ecNumber evidence="7">3.1.4.17</ecNumber>
    </recommendedName>
    <alternativeName>
        <fullName evidence="8">63 kDa Cam-PDE</fullName>
    </alternativeName>
</protein>
<feature type="chain" id="PRO_0000198787" description="Dual specificity calcium/calmodulin-dependent 3',5'-cyclic nucleotide phosphodiesterase 1B">
    <location>
        <begin position="1"/>
        <end position="534"/>
    </location>
</feature>
<feature type="domain" description="PDEase" evidence="5">
    <location>
        <begin position="144"/>
        <end position="501"/>
    </location>
</feature>
<feature type="region of interest" description="Disordered" evidence="6">
    <location>
        <begin position="1"/>
        <end position="21"/>
    </location>
</feature>
<feature type="region of interest" description="Calmodulin-binding" evidence="2">
    <location>
        <begin position="27"/>
        <end position="47"/>
    </location>
</feature>
<feature type="region of interest" description="Calmodulin-binding" evidence="2">
    <location>
        <begin position="116"/>
        <end position="139"/>
    </location>
</feature>
<feature type="region of interest" description="Disordered" evidence="6">
    <location>
        <begin position="442"/>
        <end position="473"/>
    </location>
</feature>
<feature type="region of interest" description="Disordered" evidence="6">
    <location>
        <begin position="494"/>
        <end position="534"/>
    </location>
</feature>
<feature type="compositionally biased region" description="Polar residues" evidence="6">
    <location>
        <begin position="453"/>
        <end position="462"/>
    </location>
</feature>
<feature type="active site" description="Proton donor" evidence="1">
    <location>
        <position position="221"/>
    </location>
</feature>
<feature type="binding site" evidence="3">
    <location>
        <position position="225"/>
    </location>
    <ligand>
        <name>Zn(2+)</name>
        <dbReference type="ChEBI" id="CHEBI:29105"/>
    </ligand>
</feature>
<feature type="binding site" evidence="3">
    <location>
        <position position="261"/>
    </location>
    <ligand>
        <name>Zn(2+)</name>
        <dbReference type="ChEBI" id="CHEBI:29105"/>
    </ligand>
</feature>
<feature type="binding site" evidence="3">
    <location>
        <position position="262"/>
    </location>
    <ligand>
        <name>Mg(2+)</name>
        <dbReference type="ChEBI" id="CHEBI:18420"/>
    </ligand>
</feature>
<feature type="binding site" evidence="3">
    <location>
        <position position="262"/>
    </location>
    <ligand>
        <name>Zn(2+)</name>
        <dbReference type="ChEBI" id="CHEBI:29105"/>
    </ligand>
</feature>
<feature type="binding site" evidence="3">
    <location>
        <position position="368"/>
    </location>
    <ligand>
        <name>Zn(2+)</name>
        <dbReference type="ChEBI" id="CHEBI:29105"/>
    </ligand>
</feature>
<feature type="modified residue" description="Phosphoserine" evidence="4">
    <location>
        <position position="7"/>
    </location>
</feature>
<feature type="modified residue" description="Phosphoserine" evidence="4">
    <location>
        <position position="14"/>
    </location>
</feature>
<feature type="modified residue" description="Phosphoserine" evidence="4">
    <location>
        <position position="464"/>
    </location>
</feature>
<feature type="modified residue" description="Phosphoserine" evidence="4">
    <location>
        <position position="512"/>
    </location>
</feature>
<accession>Q01061</accession>
<reference key="1">
    <citation type="journal article" date="1992" name="J. Biol. Chem.">
        <title>Molecular cloning of cDNA encoding a '63'-kDa calmodulin-stimulated phosphodiesterase from bovine brain.</title>
        <authorList>
            <person name="Bentley J.K."/>
            <person name="Kadlecek A."/>
            <person name="Sherbert C.H."/>
            <person name="Seger D."/>
            <person name="Sonnenburg W.K."/>
            <person name="Charbonneau H."/>
            <person name="Novack J.P."/>
            <person name="Beavo J.A."/>
        </authorList>
    </citation>
    <scope>NUCLEOTIDE SEQUENCE [MRNA]</scope>
    <scope>FUNCTION</scope>
    <scope>CATALYTIC ACTIVITY</scope>
    <scope>ACTIVITY REGULATION</scope>
    <scope>BIOPHYSICOCHEMICAL PROPERTIES</scope>
    <scope>TISSUE SPECIFICITY</scope>
    <source>
        <tissue>Brain</tissue>
    </source>
</reference>
<reference key="2">
    <citation type="journal article" date="1991" name="Biochemistry">
        <title>Sequence comparison of the 63-, 61-, and 59-kDa calmodulin-dependent cyclic nucleotide phosphodiesterases.</title>
        <authorList>
            <person name="Novack J.P."/>
            <person name="Charbonneau H."/>
            <person name="Bentley J.K."/>
            <person name="Walsh K.A."/>
            <person name="Beavo J.A."/>
        </authorList>
    </citation>
    <scope>PARTIAL PROTEIN SEQUENCE</scope>
    <source>
        <tissue>Brain</tissue>
    </source>
</reference>
<name>PDE1B_BOVIN</name>
<proteinExistence type="evidence at protein level"/>
<gene>
    <name evidence="3" type="primary">PDE1B</name>
    <name type="synonym">PDE1B1</name>
</gene>
<comment type="function">
    <text evidence="7">Cyclic nucleotide phosphodiesterase with a dual specificity for the second messengers cAMP and cGMP, which are key regulators of many important physiological processes. Has a preference for cGMP as a substrate.</text>
</comment>
<comment type="catalytic activity">
    <reaction evidence="7">
        <text>a nucleoside 3',5'-cyclic phosphate + H2O = a nucleoside 5'-phosphate + H(+)</text>
        <dbReference type="Rhea" id="RHEA:14653"/>
        <dbReference type="ChEBI" id="CHEBI:15377"/>
        <dbReference type="ChEBI" id="CHEBI:15378"/>
        <dbReference type="ChEBI" id="CHEBI:57867"/>
        <dbReference type="ChEBI" id="CHEBI:58464"/>
        <dbReference type="EC" id="3.1.4.17"/>
    </reaction>
    <physiologicalReaction direction="left-to-right" evidence="10">
        <dbReference type="Rhea" id="RHEA:14654"/>
    </physiologicalReaction>
</comment>
<comment type="catalytic activity">
    <reaction evidence="7">
        <text>3',5'-cyclic GMP + H2O = GMP + H(+)</text>
        <dbReference type="Rhea" id="RHEA:16957"/>
        <dbReference type="ChEBI" id="CHEBI:15377"/>
        <dbReference type="ChEBI" id="CHEBI:15378"/>
        <dbReference type="ChEBI" id="CHEBI:57746"/>
        <dbReference type="ChEBI" id="CHEBI:58115"/>
    </reaction>
    <physiologicalReaction direction="left-to-right" evidence="10">
        <dbReference type="Rhea" id="RHEA:16958"/>
    </physiologicalReaction>
</comment>
<comment type="catalytic activity">
    <reaction evidence="7">
        <text>3',5'-cyclic AMP + H2O = AMP + H(+)</text>
        <dbReference type="Rhea" id="RHEA:25277"/>
        <dbReference type="ChEBI" id="CHEBI:15377"/>
        <dbReference type="ChEBI" id="CHEBI:15378"/>
        <dbReference type="ChEBI" id="CHEBI:58165"/>
        <dbReference type="ChEBI" id="CHEBI:456215"/>
    </reaction>
    <physiologicalReaction direction="left-to-right" evidence="10">
        <dbReference type="Rhea" id="RHEA:25278"/>
    </physiologicalReaction>
</comment>
<comment type="cofactor">
    <cofactor evidence="3">
        <name>Zn(2+)</name>
        <dbReference type="ChEBI" id="CHEBI:29105"/>
    </cofactor>
    <text evidence="3">Binds 2 divalent metal cations per subunit. Site 1 may preferentially bind zinc ions.</text>
</comment>
<comment type="cofactor">
    <cofactor evidence="3">
        <name>Mg(2+)</name>
        <dbReference type="ChEBI" id="CHEBI:18420"/>
    </cofactor>
    <text evidence="3">Binds 2 divalent metal cations per subunit. Site 2 has a preference for magnesium ions.</text>
</comment>
<comment type="activity regulation">
    <text evidence="7">Type I PDE are activated by the binding of calmodulin in the presence of Ca(2+).</text>
</comment>
<comment type="biophysicochemical properties">
    <kinetics>
        <Vmax evidence="7">23.0 nmol/min/mg enzyme with cGMP as substrate (in presence of calcium and calmodulin)</Vmax>
        <Vmax evidence="7">4.9 nmol/min/mg enzyme with cAMP as substrate (in presence of calcium and calmodulin)</Vmax>
    </kinetics>
</comment>
<comment type="subunit">
    <text evidence="2">Homodimer.</text>
</comment>
<comment type="subcellular location">
    <subcellularLocation>
        <location evidence="3">Cytoplasm</location>
        <location evidence="3">Cytosol</location>
    </subcellularLocation>
</comment>
<comment type="tissue specificity">
    <text evidence="7">Expressed in central nervous system regions. Most abundant in basal ganglia. Also found in kidney papilla and adrenal medulla.</text>
</comment>
<comment type="similarity">
    <text evidence="9">Belongs to the cyclic nucleotide phosphodiesterase family. PDE1 subfamily.</text>
</comment>